<dbReference type="EMBL" id="X06826">
    <property type="protein sequence ID" value="CAA29976.1"/>
    <property type="molecule type" value="Genomic_DNA"/>
</dbReference>
<dbReference type="PIR" id="S00782">
    <property type="entry name" value="B6AG55"/>
</dbReference>
<dbReference type="RefSeq" id="NP_059803.1">
    <property type="nucleotide sequence ID" value="NC_002377.1"/>
</dbReference>
<dbReference type="NCBIfam" id="NF010434">
    <property type="entry name" value="PRK13860.1"/>
    <property type="match status" value="1"/>
</dbReference>
<protein>
    <recommendedName>
        <fullName>Protein virB5</fullName>
    </recommendedName>
</protein>
<comment type="function">
    <text>VirB proteins are suggested to act at the bacterial surface and there play an important role in directing T-DNA transfer to plant cells.</text>
</comment>
<comment type="similarity">
    <text evidence="2">Belongs to the virb5 family.</text>
</comment>
<name>VIRB5_AGRT9</name>
<organism>
    <name type="scientific">Agrobacterium tumefaciens (strain 15955)</name>
    <dbReference type="NCBI Taxonomy" id="190386"/>
    <lineage>
        <taxon>Bacteria</taxon>
        <taxon>Pseudomonadati</taxon>
        <taxon>Pseudomonadota</taxon>
        <taxon>Alphaproteobacteria</taxon>
        <taxon>Hyphomicrobiales</taxon>
        <taxon>Rhizobiaceae</taxon>
        <taxon>Rhizobium/Agrobacterium group</taxon>
        <taxon>Agrobacterium</taxon>
        <taxon>Agrobacterium tumefaciens complex</taxon>
    </lineage>
</organism>
<geneLocation type="plasmid">
    <name>pTi15955</name>
</geneLocation>
<reference key="1">
    <citation type="journal article" date="1988" name="Nucleic Acids Res.">
        <title>Analysis of the complete nucleotide sequence of the Agrobacterium tumefaciens virB operon.</title>
        <authorList>
            <person name="Thompson D.V."/>
            <person name="Melchers L.S."/>
            <person name="Idler K.B."/>
            <person name="Shilperoort R.A."/>
            <person name="Hooykaas P.J.J."/>
        </authorList>
    </citation>
    <scope>NUCLEOTIDE SEQUENCE [GENOMIC DNA]</scope>
</reference>
<feature type="signal peptide" evidence="1">
    <location>
        <begin position="1"/>
        <end position="23"/>
    </location>
</feature>
<feature type="chain" id="PRO_0000022667" description="Protein virB5">
    <location>
        <begin position="24"/>
        <end position="220"/>
    </location>
</feature>
<evidence type="ECO:0000255" key="1"/>
<evidence type="ECO:0000305" key="2"/>
<sequence>MKTTQLIATVLTCSFLYIQPARAQFVVSDPATEAETLATALATAENLTQTIAMVTMLTSAYGVTGLLTSLNQKNQYPSTKDLDNEMFSPRMPMSTTARAITSDTDRAVVGSDAEADLLRSQITGSANSAGIAADNLETMDKRLTANADTSAQLSRSRNIMQATVTNGLLLKQIHDAMIQNVQATNLLTMATAQAGLHEAEEAAAQRKEHQKTAVIFGALP</sequence>
<gene>
    <name type="primary">virB5</name>
</gene>
<accession>P0A3W3</accession>
<accession>P05355</accession>
<accession>P09778</accession>
<keyword id="KW-0192">Crown gall tumor</keyword>
<keyword id="KW-0614">Plasmid</keyword>
<keyword id="KW-0732">Signal</keyword>
<proteinExistence type="inferred from homology"/>